<dbReference type="EC" id="2.3.1.191" evidence="1"/>
<dbReference type="EMBL" id="CP000446">
    <property type="protein sequence ID" value="ABI39702.1"/>
    <property type="molecule type" value="Genomic_DNA"/>
</dbReference>
<dbReference type="RefSeq" id="WP_011623383.1">
    <property type="nucleotide sequence ID" value="NC_008321.1"/>
</dbReference>
<dbReference type="SMR" id="Q0HGW5"/>
<dbReference type="KEGG" id="she:Shewmr4_2631"/>
<dbReference type="HOGENOM" id="CLU_049865_0_1_6"/>
<dbReference type="UniPathway" id="UPA00973"/>
<dbReference type="GO" id="GO:0016020">
    <property type="term" value="C:membrane"/>
    <property type="evidence" value="ECO:0007669"/>
    <property type="project" value="GOC"/>
</dbReference>
<dbReference type="GO" id="GO:0016410">
    <property type="term" value="F:N-acyltransferase activity"/>
    <property type="evidence" value="ECO:0007669"/>
    <property type="project" value="InterPro"/>
</dbReference>
<dbReference type="GO" id="GO:0009245">
    <property type="term" value="P:lipid A biosynthetic process"/>
    <property type="evidence" value="ECO:0007669"/>
    <property type="project" value="UniProtKB-UniRule"/>
</dbReference>
<dbReference type="CDD" id="cd03352">
    <property type="entry name" value="LbH_LpxD"/>
    <property type="match status" value="1"/>
</dbReference>
<dbReference type="Gene3D" id="1.20.5.170">
    <property type="match status" value="1"/>
</dbReference>
<dbReference type="Gene3D" id="2.160.10.10">
    <property type="entry name" value="Hexapeptide repeat proteins"/>
    <property type="match status" value="1"/>
</dbReference>
<dbReference type="Gene3D" id="3.40.1390.10">
    <property type="entry name" value="MurE/MurF, N-terminal domain"/>
    <property type="match status" value="1"/>
</dbReference>
<dbReference type="HAMAP" id="MF_00523">
    <property type="entry name" value="LpxD"/>
    <property type="match status" value="1"/>
</dbReference>
<dbReference type="InterPro" id="IPR001451">
    <property type="entry name" value="Hexapep"/>
</dbReference>
<dbReference type="InterPro" id="IPR007691">
    <property type="entry name" value="LpxD"/>
</dbReference>
<dbReference type="InterPro" id="IPR011004">
    <property type="entry name" value="Trimer_LpxA-like_sf"/>
</dbReference>
<dbReference type="InterPro" id="IPR020573">
    <property type="entry name" value="UDP_GlcNAc_AcTrfase_non-rep"/>
</dbReference>
<dbReference type="NCBIfam" id="TIGR01853">
    <property type="entry name" value="lipid_A_lpxD"/>
    <property type="match status" value="1"/>
</dbReference>
<dbReference type="NCBIfam" id="NF002060">
    <property type="entry name" value="PRK00892.1"/>
    <property type="match status" value="1"/>
</dbReference>
<dbReference type="PANTHER" id="PTHR43378">
    <property type="entry name" value="UDP-3-O-ACYLGLUCOSAMINE N-ACYLTRANSFERASE"/>
    <property type="match status" value="1"/>
</dbReference>
<dbReference type="PANTHER" id="PTHR43378:SF2">
    <property type="entry name" value="UDP-3-O-ACYLGLUCOSAMINE N-ACYLTRANSFERASE 1, MITOCHONDRIAL-RELATED"/>
    <property type="match status" value="1"/>
</dbReference>
<dbReference type="Pfam" id="PF00132">
    <property type="entry name" value="Hexapep"/>
    <property type="match status" value="1"/>
</dbReference>
<dbReference type="Pfam" id="PF14602">
    <property type="entry name" value="Hexapep_2"/>
    <property type="match status" value="1"/>
</dbReference>
<dbReference type="Pfam" id="PF04613">
    <property type="entry name" value="LpxD"/>
    <property type="match status" value="1"/>
</dbReference>
<dbReference type="SUPFAM" id="SSF51161">
    <property type="entry name" value="Trimeric LpxA-like enzymes"/>
    <property type="match status" value="1"/>
</dbReference>
<dbReference type="PROSITE" id="PS00101">
    <property type="entry name" value="HEXAPEP_TRANSFERASES"/>
    <property type="match status" value="1"/>
</dbReference>
<proteinExistence type="inferred from homology"/>
<gene>
    <name evidence="1" type="primary">lpxD</name>
    <name type="ordered locus">Shewmr4_2631</name>
</gene>
<evidence type="ECO:0000255" key="1">
    <source>
        <dbReference type="HAMAP-Rule" id="MF_00523"/>
    </source>
</evidence>
<reference key="1">
    <citation type="submission" date="2006-08" db="EMBL/GenBank/DDBJ databases">
        <title>Complete sequence of Shewanella sp. MR-4.</title>
        <authorList>
            <consortium name="US DOE Joint Genome Institute"/>
            <person name="Copeland A."/>
            <person name="Lucas S."/>
            <person name="Lapidus A."/>
            <person name="Barry K."/>
            <person name="Detter J.C."/>
            <person name="Glavina del Rio T."/>
            <person name="Hammon N."/>
            <person name="Israni S."/>
            <person name="Dalin E."/>
            <person name="Tice H."/>
            <person name="Pitluck S."/>
            <person name="Kiss H."/>
            <person name="Brettin T."/>
            <person name="Bruce D."/>
            <person name="Han C."/>
            <person name="Tapia R."/>
            <person name="Gilna P."/>
            <person name="Schmutz J."/>
            <person name="Larimer F."/>
            <person name="Land M."/>
            <person name="Hauser L."/>
            <person name="Kyrpides N."/>
            <person name="Mikhailova N."/>
            <person name="Nealson K."/>
            <person name="Konstantinidis K."/>
            <person name="Klappenbach J."/>
            <person name="Tiedje J."/>
            <person name="Richardson P."/>
        </authorList>
    </citation>
    <scope>NUCLEOTIDE SEQUENCE [LARGE SCALE GENOMIC DNA]</scope>
    <source>
        <strain>MR-4</strain>
    </source>
</reference>
<comment type="function">
    <text evidence="1">Catalyzes the N-acylation of UDP-3-O-acylglucosamine using 3-hydroxyacyl-ACP as the acyl donor. Is involved in the biosynthesis of lipid A, a phosphorylated glycolipid that anchors the lipopolysaccharide to the outer membrane of the cell.</text>
</comment>
<comment type="catalytic activity">
    <reaction evidence="1">
        <text>a UDP-3-O-[(3R)-3-hydroxyacyl]-alpha-D-glucosamine + a (3R)-hydroxyacyl-[ACP] = a UDP-2-N,3-O-bis[(3R)-3-hydroxyacyl]-alpha-D-glucosamine + holo-[ACP] + H(+)</text>
        <dbReference type="Rhea" id="RHEA:53836"/>
        <dbReference type="Rhea" id="RHEA-COMP:9685"/>
        <dbReference type="Rhea" id="RHEA-COMP:9945"/>
        <dbReference type="ChEBI" id="CHEBI:15378"/>
        <dbReference type="ChEBI" id="CHEBI:64479"/>
        <dbReference type="ChEBI" id="CHEBI:78827"/>
        <dbReference type="ChEBI" id="CHEBI:137740"/>
        <dbReference type="ChEBI" id="CHEBI:137748"/>
        <dbReference type="EC" id="2.3.1.191"/>
    </reaction>
</comment>
<comment type="pathway">
    <text evidence="1">Bacterial outer membrane biogenesis; LPS lipid A biosynthesis.</text>
</comment>
<comment type="subunit">
    <text evidence="1">Homotrimer.</text>
</comment>
<comment type="similarity">
    <text evidence="1">Belongs to the transferase hexapeptide repeat family. LpxD subfamily.</text>
</comment>
<keyword id="KW-0012">Acyltransferase</keyword>
<keyword id="KW-0441">Lipid A biosynthesis</keyword>
<keyword id="KW-0444">Lipid biosynthesis</keyword>
<keyword id="KW-0443">Lipid metabolism</keyword>
<keyword id="KW-0677">Repeat</keyword>
<keyword id="KW-0808">Transferase</keyword>
<feature type="chain" id="PRO_0000264436" description="UDP-3-O-acylglucosamine N-acyltransferase">
    <location>
        <begin position="1"/>
        <end position="341"/>
    </location>
</feature>
<feature type="active site" description="Proton acceptor" evidence="1">
    <location>
        <position position="239"/>
    </location>
</feature>
<sequence length="341" mass="35726">MKSVTLKELSLLLDGVVQGDETLVINSVATLEHATAGQISFLANSKYRAQLELTQASAVLLSAKDAQDYSGTALVVKDPYVGFARVAQLLDTTPKAAIGIHPSAQIDPSALLGEGVAIGANAVIGANVILGENVQIGAGTVIGQDCIIGSNTRLWANVTLYHNVHLGQDCIIHSGAIIGSDGFGYANERGQWIKIPQTGGVRIGDRVEIGASSTIDRGALGHTEIHNGVIIDNQVQVAHNDIIGENTAIAGSTTLAGSVTIGKHCIIGGNCAIAGHLTIADGVHLSGATNVTGNMREPGLYSSATVAMENKVWRKNTVRFRQLDELFQRVKTLEKNSNTPE</sequence>
<organism>
    <name type="scientific">Shewanella sp. (strain MR-4)</name>
    <dbReference type="NCBI Taxonomy" id="60480"/>
    <lineage>
        <taxon>Bacteria</taxon>
        <taxon>Pseudomonadati</taxon>
        <taxon>Pseudomonadota</taxon>
        <taxon>Gammaproteobacteria</taxon>
        <taxon>Alteromonadales</taxon>
        <taxon>Shewanellaceae</taxon>
        <taxon>Shewanella</taxon>
    </lineage>
</organism>
<accession>Q0HGW5</accession>
<protein>
    <recommendedName>
        <fullName evidence="1">UDP-3-O-acylglucosamine N-acyltransferase</fullName>
        <ecNumber evidence="1">2.3.1.191</ecNumber>
    </recommendedName>
</protein>
<name>LPXD_SHESM</name>